<gene>
    <name type="primary">atpC</name>
</gene>
<sequence length="132" mass="13504">MADTMQFDLVSPERRLASVAASEVRLPGVEGDLTAMPGHAPVILSLRPGILTVVSAAGTAEYAVTGGFAEVSGEKVTVLAERGLTRAELTAAVHAEMLAEAKKVADAAHPSVADAAAKMLADMEALGSHINL</sequence>
<proteinExistence type="evidence at protein level"/>
<protein>
    <recommendedName>
        <fullName>ATP synthase epsilon chain</fullName>
    </recommendedName>
    <alternativeName>
        <fullName>ATP synthase F1 sector epsilon subunit</fullName>
    </alternativeName>
    <alternativeName>
        <fullName>F-ATPase epsilon subunit</fullName>
    </alternativeName>
</protein>
<accession>P72248</accession>
<keyword id="KW-0066">ATP synthesis</keyword>
<keyword id="KW-0139">CF(1)</keyword>
<keyword id="KW-0903">Direct protein sequencing</keyword>
<keyword id="KW-0375">Hydrogen ion transport</keyword>
<keyword id="KW-0406">Ion transport</keyword>
<keyword id="KW-0472">Membrane</keyword>
<keyword id="KW-0813">Transport</keyword>
<name>ATPE_RHOCA</name>
<reference key="1">
    <citation type="journal article" date="1998" name="J. Bacteriol.">
        <title>The ATP synthase atpHAGDC (F1) operon from Rhodobacter capsulatus.</title>
        <authorList>
            <person name="Borghese R."/>
            <person name="Crimi M."/>
            <person name="Fava L."/>
            <person name="Melandri B.A."/>
        </authorList>
    </citation>
    <scope>NUCLEOTIDE SEQUENCE [GENOMIC DNA]</scope>
    <source>
        <strain>ATCC 33303 / B10</strain>
    </source>
</reference>
<reference key="2">
    <citation type="journal article" date="1988" name="Biochim. Biophys. Acta">
        <title>Purification of the H+-ATPase from Rhodobacter capsulatus, identification of the F1F0 components and reconstitution of the active enzyme.</title>
        <authorList>
            <person name="Gabellini N."/>
            <person name="Gao Z."/>
            <person name="Eckerskorn C."/>
            <person name="Lottspeich F."/>
            <person name="Oesterhelt D."/>
        </authorList>
    </citation>
    <scope>PROTEIN SEQUENCE OF 2-16</scope>
    <scope>SUBUNIT</scope>
    <scope>SUBCELLULAR LOCATION</scope>
    <source>
        <strain>GA</strain>
    </source>
</reference>
<comment type="function">
    <text>Produces ATP from ADP in the presence of a proton gradient across the membrane.</text>
</comment>
<comment type="subunit">
    <text evidence="1">F-type ATPases have 2 components, CF(1) - the catalytic core - and CF(0) - the membrane proton channel. CF(1) has five subunits: alpha(3), beta(3), gamma(1), delta(1), epsilon(1). CF(0) has four main subunits: a, b, b' and c.</text>
</comment>
<comment type="subcellular location">
    <subcellularLocation>
        <location evidence="1">Cellular chromatophore membrane</location>
        <topology evidence="1">Peripheral membrane protein</topology>
    </subcellularLocation>
</comment>
<comment type="similarity">
    <text evidence="2">Belongs to the ATPase epsilon chain family.</text>
</comment>
<evidence type="ECO:0000269" key="1">
    <source ref="2"/>
</evidence>
<evidence type="ECO:0000305" key="2"/>
<feature type="initiator methionine" description="Removed" evidence="1">
    <location>
        <position position="1"/>
    </location>
</feature>
<feature type="chain" id="PRO_0000188189" description="ATP synthase epsilon chain">
    <location>
        <begin position="2"/>
        <end position="132"/>
    </location>
</feature>
<organism>
    <name type="scientific">Rhodobacter capsulatus</name>
    <name type="common">Rhodopseudomonas capsulata</name>
    <dbReference type="NCBI Taxonomy" id="1061"/>
    <lineage>
        <taxon>Bacteria</taxon>
        <taxon>Pseudomonadati</taxon>
        <taxon>Pseudomonadota</taxon>
        <taxon>Alphaproteobacteria</taxon>
        <taxon>Rhodobacterales</taxon>
        <taxon>Rhodobacter group</taxon>
        <taxon>Rhodobacter</taxon>
    </lineage>
</organism>
<dbReference type="EMBL" id="X99599">
    <property type="protein sequence ID" value="CAA67911.1"/>
    <property type="molecule type" value="Genomic_DNA"/>
</dbReference>
<dbReference type="RefSeq" id="WP_013068670.1">
    <property type="nucleotide sequence ID" value="NZ_VIBE01000018.1"/>
</dbReference>
<dbReference type="SMR" id="P72248"/>
<dbReference type="OMA" id="LTVMAHH"/>
<dbReference type="GO" id="GO:0005886">
    <property type="term" value="C:plasma membrane"/>
    <property type="evidence" value="ECO:0007669"/>
    <property type="project" value="UniProtKB-UniRule"/>
</dbReference>
<dbReference type="GO" id="GO:0042717">
    <property type="term" value="C:plasma membrane-derived chromatophore membrane"/>
    <property type="evidence" value="ECO:0007669"/>
    <property type="project" value="UniProtKB-SubCell"/>
</dbReference>
<dbReference type="GO" id="GO:0045259">
    <property type="term" value="C:proton-transporting ATP synthase complex"/>
    <property type="evidence" value="ECO:0007669"/>
    <property type="project" value="UniProtKB-KW"/>
</dbReference>
<dbReference type="GO" id="GO:0005524">
    <property type="term" value="F:ATP binding"/>
    <property type="evidence" value="ECO:0007669"/>
    <property type="project" value="UniProtKB-UniRule"/>
</dbReference>
<dbReference type="GO" id="GO:0046933">
    <property type="term" value="F:proton-transporting ATP synthase activity, rotational mechanism"/>
    <property type="evidence" value="ECO:0007669"/>
    <property type="project" value="UniProtKB-UniRule"/>
</dbReference>
<dbReference type="CDD" id="cd12152">
    <property type="entry name" value="F1-ATPase_delta"/>
    <property type="match status" value="1"/>
</dbReference>
<dbReference type="Gene3D" id="2.60.15.10">
    <property type="entry name" value="F0F1 ATP synthase delta/epsilon subunit, N-terminal"/>
    <property type="match status" value="1"/>
</dbReference>
<dbReference type="HAMAP" id="MF_00530">
    <property type="entry name" value="ATP_synth_epsil_bac"/>
    <property type="match status" value="1"/>
</dbReference>
<dbReference type="InterPro" id="IPR001469">
    <property type="entry name" value="ATP_synth_F1_dsu/esu"/>
</dbReference>
<dbReference type="InterPro" id="IPR020546">
    <property type="entry name" value="ATP_synth_F1_dsu/esu_N"/>
</dbReference>
<dbReference type="InterPro" id="IPR036771">
    <property type="entry name" value="ATPsynth_dsu/esu_N"/>
</dbReference>
<dbReference type="NCBIfam" id="TIGR01216">
    <property type="entry name" value="ATP_synt_epsi"/>
    <property type="match status" value="1"/>
</dbReference>
<dbReference type="NCBIfam" id="NF009978">
    <property type="entry name" value="PRK13443.1"/>
    <property type="match status" value="1"/>
</dbReference>
<dbReference type="PANTHER" id="PTHR13822">
    <property type="entry name" value="ATP SYNTHASE DELTA/EPSILON CHAIN"/>
    <property type="match status" value="1"/>
</dbReference>
<dbReference type="PANTHER" id="PTHR13822:SF10">
    <property type="entry name" value="ATP SYNTHASE EPSILON CHAIN, CHLOROPLASTIC"/>
    <property type="match status" value="1"/>
</dbReference>
<dbReference type="Pfam" id="PF02823">
    <property type="entry name" value="ATP-synt_DE_N"/>
    <property type="match status" value="1"/>
</dbReference>
<dbReference type="SUPFAM" id="SSF51344">
    <property type="entry name" value="Epsilon subunit of F1F0-ATP synthase N-terminal domain"/>
    <property type="match status" value="1"/>
</dbReference>